<proteinExistence type="evidence at transcript level"/>
<protein>
    <recommendedName>
        <fullName>L-lactate dehydrogenase C chain</fullName>
        <shortName>LDH-C</shortName>
        <ecNumber>1.1.1.27</ecNumber>
    </recommendedName>
</protein>
<name>LDHC_XENLA</name>
<organism>
    <name type="scientific">Xenopus laevis</name>
    <name type="common">African clawed frog</name>
    <dbReference type="NCBI Taxonomy" id="8355"/>
    <lineage>
        <taxon>Eukaryota</taxon>
        <taxon>Metazoa</taxon>
        <taxon>Chordata</taxon>
        <taxon>Craniata</taxon>
        <taxon>Vertebrata</taxon>
        <taxon>Euteleostomi</taxon>
        <taxon>Amphibia</taxon>
        <taxon>Batrachia</taxon>
        <taxon>Anura</taxon>
        <taxon>Pipoidea</taxon>
        <taxon>Pipidae</taxon>
        <taxon>Xenopodinae</taxon>
        <taxon>Xenopus</taxon>
        <taxon>Xenopus</taxon>
    </lineage>
</organism>
<dbReference type="EC" id="1.1.1.27"/>
<dbReference type="EMBL" id="U07175">
    <property type="protein sequence ID" value="AAA50433.1"/>
    <property type="molecule type" value="mRNA"/>
</dbReference>
<dbReference type="PIR" id="I51654">
    <property type="entry name" value="I51654"/>
</dbReference>
<dbReference type="RefSeq" id="NP_001165451.1">
    <property type="nucleotide sequence ID" value="NM_001171980.1"/>
</dbReference>
<dbReference type="SMR" id="P42121"/>
<dbReference type="BioGRID" id="1078896">
    <property type="interactions" value="1"/>
</dbReference>
<dbReference type="AGR" id="Xenbase:XB-GENE-5908692"/>
<dbReference type="Xenbase" id="XB-GENE-5908692">
    <property type="gene designation" value="ldhb.S"/>
</dbReference>
<dbReference type="UniPathway" id="UPA00554">
    <property type="reaction ID" value="UER00611"/>
</dbReference>
<dbReference type="Proteomes" id="UP000186698">
    <property type="component" value="Unplaced"/>
</dbReference>
<dbReference type="GO" id="GO:0005739">
    <property type="term" value="C:mitochondrion"/>
    <property type="evidence" value="ECO:0000318"/>
    <property type="project" value="GO_Central"/>
</dbReference>
<dbReference type="GO" id="GO:0004459">
    <property type="term" value="F:L-lactate dehydrogenase activity"/>
    <property type="evidence" value="ECO:0000318"/>
    <property type="project" value="GO_Central"/>
</dbReference>
<dbReference type="GO" id="GO:0006089">
    <property type="term" value="P:lactate metabolic process"/>
    <property type="evidence" value="ECO:0000318"/>
    <property type="project" value="GO_Central"/>
</dbReference>
<dbReference type="GO" id="GO:0006090">
    <property type="term" value="P:pyruvate metabolic process"/>
    <property type="evidence" value="ECO:0000318"/>
    <property type="project" value="GO_Central"/>
</dbReference>
<dbReference type="CDD" id="cd05293">
    <property type="entry name" value="LDH_1"/>
    <property type="match status" value="1"/>
</dbReference>
<dbReference type="FunFam" id="3.40.50.720:FF:000029">
    <property type="entry name" value="L-lactate dehydrogenase A chain"/>
    <property type="match status" value="1"/>
</dbReference>
<dbReference type="FunFam" id="3.90.110.10:FF:000003">
    <property type="entry name" value="L-lactate dehydrogenase A chain"/>
    <property type="match status" value="1"/>
</dbReference>
<dbReference type="Gene3D" id="3.90.110.10">
    <property type="entry name" value="Lactate dehydrogenase/glycoside hydrolase, family 4, C-terminal"/>
    <property type="match status" value="1"/>
</dbReference>
<dbReference type="Gene3D" id="3.40.50.720">
    <property type="entry name" value="NAD(P)-binding Rossmann-like Domain"/>
    <property type="match status" value="1"/>
</dbReference>
<dbReference type="HAMAP" id="MF_00488">
    <property type="entry name" value="Lactate_dehydrog"/>
    <property type="match status" value="1"/>
</dbReference>
<dbReference type="InterPro" id="IPR001557">
    <property type="entry name" value="L-lactate/malate_DH"/>
</dbReference>
<dbReference type="InterPro" id="IPR011304">
    <property type="entry name" value="L-lactate_DH"/>
</dbReference>
<dbReference type="InterPro" id="IPR018177">
    <property type="entry name" value="L-lactate_DH_AS"/>
</dbReference>
<dbReference type="InterPro" id="IPR022383">
    <property type="entry name" value="Lactate/malate_DH_C"/>
</dbReference>
<dbReference type="InterPro" id="IPR001236">
    <property type="entry name" value="Lactate/malate_DH_N"/>
</dbReference>
<dbReference type="InterPro" id="IPR015955">
    <property type="entry name" value="Lactate_DH/Glyco_Ohase_4_C"/>
</dbReference>
<dbReference type="InterPro" id="IPR036291">
    <property type="entry name" value="NAD(P)-bd_dom_sf"/>
</dbReference>
<dbReference type="NCBIfam" id="TIGR01771">
    <property type="entry name" value="L-LDH-NAD"/>
    <property type="match status" value="1"/>
</dbReference>
<dbReference type="PANTHER" id="PTHR43128">
    <property type="entry name" value="L-2-HYDROXYCARBOXYLATE DEHYDROGENASE (NAD(P)(+))"/>
    <property type="match status" value="1"/>
</dbReference>
<dbReference type="PANTHER" id="PTHR43128:SF2">
    <property type="entry name" value="L-LACTATE DEHYDROGENASE B CHAIN"/>
    <property type="match status" value="1"/>
</dbReference>
<dbReference type="Pfam" id="PF02866">
    <property type="entry name" value="Ldh_1_C"/>
    <property type="match status" value="1"/>
</dbReference>
<dbReference type="Pfam" id="PF00056">
    <property type="entry name" value="Ldh_1_N"/>
    <property type="match status" value="1"/>
</dbReference>
<dbReference type="PIRSF" id="PIRSF000102">
    <property type="entry name" value="Lac_mal_DH"/>
    <property type="match status" value="1"/>
</dbReference>
<dbReference type="PRINTS" id="PR00086">
    <property type="entry name" value="LLDHDRGNASE"/>
</dbReference>
<dbReference type="SUPFAM" id="SSF56327">
    <property type="entry name" value="LDH C-terminal domain-like"/>
    <property type="match status" value="1"/>
</dbReference>
<dbReference type="SUPFAM" id="SSF51735">
    <property type="entry name" value="NAD(P)-binding Rossmann-fold domains"/>
    <property type="match status" value="1"/>
</dbReference>
<dbReference type="PROSITE" id="PS00064">
    <property type="entry name" value="L_LDH"/>
    <property type="match status" value="1"/>
</dbReference>
<reference key="1">
    <citation type="journal article" date="1994" name="Proc. Natl. Acad. Sci. U.S.A.">
        <title>Evolutionary relationships of lactate dehydrogenases (LDHs) from mammals, birds, an amphibian, fish, barley, and bacteria: LDH cDNA sequences from Xenopus, pig, and rat.</title>
        <authorList>
            <person name="Tsuji S."/>
            <person name="Qureshi M.A."/>
            <person name="Hou E.W."/>
            <person name="Fitch W.M."/>
            <person name="Li S.S.-L."/>
        </authorList>
    </citation>
    <scope>NUCLEOTIDE SEQUENCE [MRNA]</scope>
    <source>
        <tissue>Oocyte</tissue>
    </source>
</reference>
<accession>P42121</accession>
<sequence length="334" mass="36277">MSSVQENLITNVCQDKAAKPTNKITIVGVGQVGMACAVSVLLKELADELALVDILEDKLKGEVMDLQHGSLFLKTPTIVADKDYSVTANSRIVVVTGGVRQQEGESALNLVQRNVNVFKFIIPQVVKYSPDCIIIVVSNPVDILTYVTWKLSGLPQHRIIGSGTNLDSARFRHLISEKLGVHPSSCHGFILGEHGDTSVAVWSGVNVAGVSLQSLKPEIGTDQDSCNWKEVHKKVVDSAYEVIKLKGYTNWAIGFSVAEIVESITKNLGRVHPVSTMVKGMYGIETEVFLSLPCVLNGNGLTSVISQKLKDDEVGQLQKSSETLWGIQKDLQVL</sequence>
<gene>
    <name type="primary">ldhc</name>
</gene>
<evidence type="ECO:0000250" key="1"/>
<evidence type="ECO:0000305" key="2"/>
<keyword id="KW-0963">Cytoplasm</keyword>
<keyword id="KW-0520">NAD</keyword>
<keyword id="KW-0560">Oxidoreductase</keyword>
<keyword id="KW-1185">Reference proteome</keyword>
<feature type="initiator methionine" description="Removed" evidence="1">
    <location>
        <position position="1"/>
    </location>
</feature>
<feature type="chain" id="PRO_0000168487" description="L-lactate dehydrogenase C chain">
    <location>
        <begin position="2"/>
        <end position="334"/>
    </location>
</feature>
<feature type="active site" description="Proton acceptor" evidence="1">
    <location>
        <position position="194"/>
    </location>
</feature>
<feature type="binding site" evidence="1">
    <location>
        <begin position="30"/>
        <end position="58"/>
    </location>
    <ligand>
        <name>NAD(+)</name>
        <dbReference type="ChEBI" id="CHEBI:57540"/>
    </ligand>
</feature>
<feature type="binding site" evidence="1">
    <location>
        <position position="100"/>
    </location>
    <ligand>
        <name>NAD(+)</name>
        <dbReference type="ChEBI" id="CHEBI:57540"/>
    </ligand>
</feature>
<feature type="binding site" evidence="1">
    <location>
        <position position="139"/>
    </location>
    <ligand>
        <name>NAD(+)</name>
        <dbReference type="ChEBI" id="CHEBI:57540"/>
    </ligand>
</feature>
<feature type="binding site" evidence="1">
    <location>
        <position position="139"/>
    </location>
    <ligand>
        <name>substrate</name>
    </ligand>
</feature>
<feature type="binding site" evidence="1">
    <location>
        <position position="170"/>
    </location>
    <ligand>
        <name>substrate</name>
    </ligand>
</feature>
<feature type="binding site" evidence="1">
    <location>
        <position position="249"/>
    </location>
    <ligand>
        <name>substrate</name>
    </ligand>
</feature>
<comment type="catalytic activity">
    <reaction>
        <text>(S)-lactate + NAD(+) = pyruvate + NADH + H(+)</text>
        <dbReference type="Rhea" id="RHEA:23444"/>
        <dbReference type="ChEBI" id="CHEBI:15361"/>
        <dbReference type="ChEBI" id="CHEBI:15378"/>
        <dbReference type="ChEBI" id="CHEBI:16651"/>
        <dbReference type="ChEBI" id="CHEBI:57540"/>
        <dbReference type="ChEBI" id="CHEBI:57945"/>
        <dbReference type="EC" id="1.1.1.27"/>
    </reaction>
</comment>
<comment type="pathway">
    <text>Fermentation; pyruvate fermentation to lactate; (S)-lactate from pyruvate: step 1/1.</text>
</comment>
<comment type="subunit">
    <text>Homotetramer.</text>
</comment>
<comment type="subcellular location">
    <subcellularLocation>
        <location evidence="1">Cytoplasm</location>
    </subcellularLocation>
</comment>
<comment type="similarity">
    <text evidence="2">Belongs to the LDH/MDH superfamily. LDH family.</text>
</comment>